<gene>
    <name evidence="1" type="primary">purT</name>
    <name type="ordered locus">Bcep1808_2408</name>
</gene>
<keyword id="KW-0067">ATP-binding</keyword>
<keyword id="KW-0436">Ligase</keyword>
<keyword id="KW-0460">Magnesium</keyword>
<keyword id="KW-0479">Metal-binding</keyword>
<keyword id="KW-0547">Nucleotide-binding</keyword>
<keyword id="KW-0658">Purine biosynthesis</keyword>
<protein>
    <recommendedName>
        <fullName evidence="1">Formate-dependent phosphoribosylglycinamide formyltransferase</fullName>
        <ecNumber evidence="1">6.3.1.21</ecNumber>
    </recommendedName>
    <alternativeName>
        <fullName evidence="1">5'-phosphoribosylglycinamide transformylase 2</fullName>
    </alternativeName>
    <alternativeName>
        <fullName evidence="1">Formate-dependent GAR transformylase</fullName>
    </alternativeName>
    <alternativeName>
        <fullName evidence="1">GAR transformylase 2</fullName>
        <shortName evidence="1">GART 2</shortName>
    </alternativeName>
    <alternativeName>
        <fullName evidence="1">Non-folate glycinamide ribonucleotide transformylase</fullName>
    </alternativeName>
    <alternativeName>
        <fullName evidence="1">Phosphoribosylglycinamide formyltransferase 2</fullName>
    </alternativeName>
</protein>
<feature type="chain" id="PRO_0000319147" description="Formate-dependent phosphoribosylglycinamide formyltransferase">
    <location>
        <begin position="1"/>
        <end position="404"/>
    </location>
</feature>
<feature type="domain" description="ATP-grasp" evidence="1">
    <location>
        <begin position="123"/>
        <end position="318"/>
    </location>
</feature>
<feature type="binding site" evidence="1">
    <location>
        <begin position="25"/>
        <end position="26"/>
    </location>
    <ligand>
        <name>N(1)-(5-phospho-beta-D-ribosyl)glycinamide</name>
        <dbReference type="ChEBI" id="CHEBI:143788"/>
    </ligand>
</feature>
<feature type="binding site" evidence="1">
    <location>
        <position position="85"/>
    </location>
    <ligand>
        <name>N(1)-(5-phospho-beta-D-ribosyl)glycinamide</name>
        <dbReference type="ChEBI" id="CHEBI:143788"/>
    </ligand>
</feature>
<feature type="binding site" evidence="1">
    <location>
        <position position="118"/>
    </location>
    <ligand>
        <name>ATP</name>
        <dbReference type="ChEBI" id="CHEBI:30616"/>
    </ligand>
</feature>
<feature type="binding site" evidence="1">
    <location>
        <position position="159"/>
    </location>
    <ligand>
        <name>ATP</name>
        <dbReference type="ChEBI" id="CHEBI:30616"/>
    </ligand>
</feature>
<feature type="binding site" evidence="1">
    <location>
        <begin position="164"/>
        <end position="169"/>
    </location>
    <ligand>
        <name>ATP</name>
        <dbReference type="ChEBI" id="CHEBI:30616"/>
    </ligand>
</feature>
<feature type="binding site" evidence="1">
    <location>
        <begin position="199"/>
        <end position="202"/>
    </location>
    <ligand>
        <name>ATP</name>
        <dbReference type="ChEBI" id="CHEBI:30616"/>
    </ligand>
</feature>
<feature type="binding site" evidence="1">
    <location>
        <position position="207"/>
    </location>
    <ligand>
        <name>ATP</name>
        <dbReference type="ChEBI" id="CHEBI:30616"/>
    </ligand>
</feature>
<feature type="binding site" evidence="1">
    <location>
        <position position="277"/>
    </location>
    <ligand>
        <name>Mg(2+)</name>
        <dbReference type="ChEBI" id="CHEBI:18420"/>
    </ligand>
</feature>
<feature type="binding site" evidence="1">
    <location>
        <position position="289"/>
    </location>
    <ligand>
        <name>Mg(2+)</name>
        <dbReference type="ChEBI" id="CHEBI:18420"/>
    </ligand>
</feature>
<feature type="binding site" evidence="1">
    <location>
        <position position="296"/>
    </location>
    <ligand>
        <name>N(1)-(5-phospho-beta-D-ribosyl)glycinamide</name>
        <dbReference type="ChEBI" id="CHEBI:143788"/>
    </ligand>
</feature>
<feature type="binding site" evidence="1">
    <location>
        <position position="365"/>
    </location>
    <ligand>
        <name>N(1)-(5-phospho-beta-D-ribosyl)glycinamide</name>
        <dbReference type="ChEBI" id="CHEBI:143788"/>
    </ligand>
</feature>
<feature type="binding site" evidence="1">
    <location>
        <begin position="372"/>
        <end position="373"/>
    </location>
    <ligand>
        <name>N(1)-(5-phospho-beta-D-ribosyl)glycinamide</name>
        <dbReference type="ChEBI" id="CHEBI:143788"/>
    </ligand>
</feature>
<organism>
    <name type="scientific">Burkholderia vietnamiensis (strain G4 / LMG 22486)</name>
    <name type="common">Burkholderia cepacia (strain R1808)</name>
    <dbReference type="NCBI Taxonomy" id="269482"/>
    <lineage>
        <taxon>Bacteria</taxon>
        <taxon>Pseudomonadati</taxon>
        <taxon>Pseudomonadota</taxon>
        <taxon>Betaproteobacteria</taxon>
        <taxon>Burkholderiales</taxon>
        <taxon>Burkholderiaceae</taxon>
        <taxon>Burkholderia</taxon>
        <taxon>Burkholderia cepacia complex</taxon>
    </lineage>
</organism>
<comment type="function">
    <text evidence="1">Involved in the de novo purine biosynthesis. Catalyzes the transfer of formate to 5-phospho-ribosyl-glycinamide (GAR), producing 5-phospho-ribosyl-N-formylglycinamide (FGAR). Formate is provided by PurU via hydrolysis of 10-formyl-tetrahydrofolate.</text>
</comment>
<comment type="catalytic activity">
    <reaction evidence="1">
        <text>N(1)-(5-phospho-beta-D-ribosyl)glycinamide + formate + ATP = N(2)-formyl-N(1)-(5-phospho-beta-D-ribosyl)glycinamide + ADP + phosphate + H(+)</text>
        <dbReference type="Rhea" id="RHEA:24829"/>
        <dbReference type="ChEBI" id="CHEBI:15378"/>
        <dbReference type="ChEBI" id="CHEBI:15740"/>
        <dbReference type="ChEBI" id="CHEBI:30616"/>
        <dbReference type="ChEBI" id="CHEBI:43474"/>
        <dbReference type="ChEBI" id="CHEBI:143788"/>
        <dbReference type="ChEBI" id="CHEBI:147286"/>
        <dbReference type="ChEBI" id="CHEBI:456216"/>
        <dbReference type="EC" id="6.3.1.21"/>
    </reaction>
    <physiologicalReaction direction="left-to-right" evidence="1">
        <dbReference type="Rhea" id="RHEA:24830"/>
    </physiologicalReaction>
</comment>
<comment type="pathway">
    <text evidence="1">Purine metabolism; IMP biosynthesis via de novo pathway; N(2)-formyl-N(1)-(5-phospho-D-ribosyl)glycinamide from N(1)-(5-phospho-D-ribosyl)glycinamide (formate route): step 1/1.</text>
</comment>
<comment type="subunit">
    <text evidence="1">Homodimer.</text>
</comment>
<comment type="similarity">
    <text evidence="1">Belongs to the PurK/PurT family.</text>
</comment>
<reference key="1">
    <citation type="submission" date="2007-03" db="EMBL/GenBank/DDBJ databases">
        <title>Complete sequence of chromosome 1 of Burkholderia vietnamiensis G4.</title>
        <authorList>
            <consortium name="US DOE Joint Genome Institute"/>
            <person name="Copeland A."/>
            <person name="Lucas S."/>
            <person name="Lapidus A."/>
            <person name="Barry K."/>
            <person name="Detter J.C."/>
            <person name="Glavina del Rio T."/>
            <person name="Hammon N."/>
            <person name="Israni S."/>
            <person name="Dalin E."/>
            <person name="Tice H."/>
            <person name="Pitluck S."/>
            <person name="Chain P."/>
            <person name="Malfatti S."/>
            <person name="Shin M."/>
            <person name="Vergez L."/>
            <person name="Schmutz J."/>
            <person name="Larimer F."/>
            <person name="Land M."/>
            <person name="Hauser L."/>
            <person name="Kyrpides N."/>
            <person name="Tiedje J."/>
            <person name="Richardson P."/>
        </authorList>
    </citation>
    <scope>NUCLEOTIDE SEQUENCE [LARGE SCALE GENOMIC DNA]</scope>
    <source>
        <strain>G4 / LMG 22486</strain>
    </source>
</reference>
<accession>A4JGK4</accession>
<proteinExistence type="inferred from homology"/>
<name>PURT_BURVG</name>
<sequence>MQIGQRLGTPLSPSATRVMLLGAGELGKEVIIALQRLGVEVIAVDRYPDAPGHQVAHRAHVIDMTDAAALRALVEAERPHLIVPEIEAIATDALAAIEAAGLAEVIPTARATQLTMNREGIRRLAAEELGLATSPYAFADSFDAFSAAVAKIGMPCVVKPVMSSSGKGQSVVRSEADVKAAWDYAMAGGRVNHGRVIVEGFIDFDYEITQLTVRAIDPATLATRTYFCEPVGHVQVAGDYVESWQPQPMSAAALQKSRDIAHKVTEALGGRGLFGVELFVRGDDVWFSEVSPRPHDTGLVTLASQRQSEFELHARAILGLPVDPTLGSPAASAVIYGGLDERGIAFEGVRDALAVPGADLRLFGKPESFVKRRMGVALATGANVDEARERAKRAAAAVRPVSSR</sequence>
<evidence type="ECO:0000255" key="1">
    <source>
        <dbReference type="HAMAP-Rule" id="MF_01643"/>
    </source>
</evidence>
<dbReference type="EC" id="6.3.1.21" evidence="1"/>
<dbReference type="EMBL" id="CP000614">
    <property type="protein sequence ID" value="ABO55407.1"/>
    <property type="molecule type" value="Genomic_DNA"/>
</dbReference>
<dbReference type="SMR" id="A4JGK4"/>
<dbReference type="KEGG" id="bvi:Bcep1808_2408"/>
<dbReference type="eggNOG" id="COG0027">
    <property type="taxonomic scope" value="Bacteria"/>
</dbReference>
<dbReference type="HOGENOM" id="CLU_011534_1_3_4"/>
<dbReference type="UniPathway" id="UPA00074">
    <property type="reaction ID" value="UER00127"/>
</dbReference>
<dbReference type="Proteomes" id="UP000002287">
    <property type="component" value="Chromosome 1"/>
</dbReference>
<dbReference type="GO" id="GO:0005829">
    <property type="term" value="C:cytosol"/>
    <property type="evidence" value="ECO:0007669"/>
    <property type="project" value="TreeGrafter"/>
</dbReference>
<dbReference type="GO" id="GO:0005524">
    <property type="term" value="F:ATP binding"/>
    <property type="evidence" value="ECO:0007669"/>
    <property type="project" value="UniProtKB-UniRule"/>
</dbReference>
<dbReference type="GO" id="GO:0000287">
    <property type="term" value="F:magnesium ion binding"/>
    <property type="evidence" value="ECO:0007669"/>
    <property type="project" value="InterPro"/>
</dbReference>
<dbReference type="GO" id="GO:0043815">
    <property type="term" value="F:phosphoribosylglycinamide formyltransferase 2 activity"/>
    <property type="evidence" value="ECO:0007669"/>
    <property type="project" value="UniProtKB-UniRule"/>
</dbReference>
<dbReference type="GO" id="GO:0004644">
    <property type="term" value="F:phosphoribosylglycinamide formyltransferase activity"/>
    <property type="evidence" value="ECO:0007669"/>
    <property type="project" value="InterPro"/>
</dbReference>
<dbReference type="GO" id="GO:0006189">
    <property type="term" value="P:'de novo' IMP biosynthetic process"/>
    <property type="evidence" value="ECO:0007669"/>
    <property type="project" value="UniProtKB-UniRule"/>
</dbReference>
<dbReference type="FunFam" id="3.30.1490.20:FF:000013">
    <property type="entry name" value="Formate-dependent phosphoribosylglycinamide formyltransferase"/>
    <property type="match status" value="1"/>
</dbReference>
<dbReference type="FunFam" id="3.40.50.20:FF:000007">
    <property type="entry name" value="Formate-dependent phosphoribosylglycinamide formyltransferase"/>
    <property type="match status" value="1"/>
</dbReference>
<dbReference type="Gene3D" id="3.40.50.20">
    <property type="match status" value="1"/>
</dbReference>
<dbReference type="Gene3D" id="3.30.1490.20">
    <property type="entry name" value="ATP-grasp fold, A domain"/>
    <property type="match status" value="1"/>
</dbReference>
<dbReference type="Gene3D" id="3.30.470.20">
    <property type="entry name" value="ATP-grasp fold, B domain"/>
    <property type="match status" value="1"/>
</dbReference>
<dbReference type="HAMAP" id="MF_01643">
    <property type="entry name" value="PurT"/>
    <property type="match status" value="1"/>
</dbReference>
<dbReference type="InterPro" id="IPR011761">
    <property type="entry name" value="ATP-grasp"/>
</dbReference>
<dbReference type="InterPro" id="IPR003135">
    <property type="entry name" value="ATP-grasp_carboxylate-amine"/>
</dbReference>
<dbReference type="InterPro" id="IPR013815">
    <property type="entry name" value="ATP_grasp_subdomain_1"/>
</dbReference>
<dbReference type="InterPro" id="IPR016185">
    <property type="entry name" value="PreATP-grasp_dom_sf"/>
</dbReference>
<dbReference type="InterPro" id="IPR005862">
    <property type="entry name" value="PurT"/>
</dbReference>
<dbReference type="InterPro" id="IPR054350">
    <property type="entry name" value="PurT/PurK_preATP-grasp"/>
</dbReference>
<dbReference type="InterPro" id="IPR048740">
    <property type="entry name" value="PurT_C"/>
</dbReference>
<dbReference type="InterPro" id="IPR011054">
    <property type="entry name" value="Rudment_hybrid_motif"/>
</dbReference>
<dbReference type="NCBIfam" id="NF006766">
    <property type="entry name" value="PRK09288.1"/>
    <property type="match status" value="1"/>
</dbReference>
<dbReference type="NCBIfam" id="TIGR01142">
    <property type="entry name" value="purT"/>
    <property type="match status" value="1"/>
</dbReference>
<dbReference type="PANTHER" id="PTHR43055">
    <property type="entry name" value="FORMATE-DEPENDENT PHOSPHORIBOSYLGLYCINAMIDE FORMYLTRANSFERASE"/>
    <property type="match status" value="1"/>
</dbReference>
<dbReference type="PANTHER" id="PTHR43055:SF1">
    <property type="entry name" value="FORMATE-DEPENDENT PHOSPHORIBOSYLGLYCINAMIDE FORMYLTRANSFERASE"/>
    <property type="match status" value="1"/>
</dbReference>
<dbReference type="Pfam" id="PF02222">
    <property type="entry name" value="ATP-grasp"/>
    <property type="match status" value="1"/>
</dbReference>
<dbReference type="Pfam" id="PF21244">
    <property type="entry name" value="PurT_C"/>
    <property type="match status" value="1"/>
</dbReference>
<dbReference type="Pfam" id="PF22660">
    <property type="entry name" value="RS_preATP-grasp-like"/>
    <property type="match status" value="1"/>
</dbReference>
<dbReference type="SUPFAM" id="SSF56059">
    <property type="entry name" value="Glutathione synthetase ATP-binding domain-like"/>
    <property type="match status" value="1"/>
</dbReference>
<dbReference type="SUPFAM" id="SSF52440">
    <property type="entry name" value="PreATP-grasp domain"/>
    <property type="match status" value="1"/>
</dbReference>
<dbReference type="SUPFAM" id="SSF51246">
    <property type="entry name" value="Rudiment single hybrid motif"/>
    <property type="match status" value="1"/>
</dbReference>
<dbReference type="PROSITE" id="PS50975">
    <property type="entry name" value="ATP_GRASP"/>
    <property type="match status" value="1"/>
</dbReference>